<dbReference type="SMR" id="P00123"/>
<dbReference type="GO" id="GO:0009055">
    <property type="term" value="F:electron transfer activity"/>
    <property type="evidence" value="ECO:0007669"/>
    <property type="project" value="InterPro"/>
</dbReference>
<dbReference type="GO" id="GO:0020037">
    <property type="term" value="F:heme binding"/>
    <property type="evidence" value="ECO:0007669"/>
    <property type="project" value="InterPro"/>
</dbReference>
<dbReference type="GO" id="GO:0005506">
    <property type="term" value="F:iron ion binding"/>
    <property type="evidence" value="ECO:0007669"/>
    <property type="project" value="InterPro"/>
</dbReference>
<dbReference type="GO" id="GO:0015979">
    <property type="term" value="P:photosynthesis"/>
    <property type="evidence" value="ECO:0007669"/>
    <property type="project" value="UniProtKB-KW"/>
</dbReference>
<dbReference type="Gene3D" id="1.10.760.10">
    <property type="entry name" value="Cytochrome c-like domain"/>
    <property type="match status" value="1"/>
</dbReference>
<dbReference type="InterPro" id="IPR009056">
    <property type="entry name" value="Cyt_c-like_dom"/>
</dbReference>
<dbReference type="InterPro" id="IPR036909">
    <property type="entry name" value="Cyt_c-like_dom_sf"/>
</dbReference>
<dbReference type="InterPro" id="IPR002323">
    <property type="entry name" value="Cyt_CIE"/>
</dbReference>
<dbReference type="PANTHER" id="PTHR40942">
    <property type="match status" value="1"/>
</dbReference>
<dbReference type="PANTHER" id="PTHR40942:SF4">
    <property type="entry name" value="CYTOCHROME C5"/>
    <property type="match status" value="1"/>
</dbReference>
<dbReference type="Pfam" id="PF13442">
    <property type="entry name" value="Cytochrome_CBB3"/>
    <property type="match status" value="1"/>
</dbReference>
<dbReference type="PRINTS" id="PR00607">
    <property type="entry name" value="CYTCHROMECIE"/>
</dbReference>
<dbReference type="SUPFAM" id="SSF46626">
    <property type="entry name" value="Cytochrome c"/>
    <property type="match status" value="1"/>
</dbReference>
<dbReference type="PROSITE" id="PS51007">
    <property type="entry name" value="CYTC"/>
    <property type="match status" value="1"/>
</dbReference>
<feature type="chain" id="PRO_0000108408" description="Cytochrome c-555">
    <location>
        <begin position="1"/>
        <end position="86"/>
    </location>
</feature>
<feature type="binding site" description="covalent">
    <location>
        <position position="14"/>
    </location>
    <ligand>
        <name>heme c</name>
        <dbReference type="ChEBI" id="CHEBI:61717"/>
    </ligand>
</feature>
<feature type="binding site" description="covalent">
    <location>
        <position position="17"/>
    </location>
    <ligand>
        <name>heme c</name>
        <dbReference type="ChEBI" id="CHEBI:61717"/>
    </ligand>
</feature>
<feature type="binding site" description="axial binding residue">
    <location>
        <position position="18"/>
    </location>
    <ligand>
        <name>heme c</name>
        <dbReference type="ChEBI" id="CHEBI:61717"/>
    </ligand>
    <ligandPart>
        <name>Fe</name>
        <dbReference type="ChEBI" id="CHEBI:18248"/>
    </ligandPart>
</feature>
<feature type="binding site" description="axial binding residue">
    <location>
        <position position="60"/>
    </location>
    <ligand>
        <name>heme c</name>
        <dbReference type="ChEBI" id="CHEBI:61717"/>
    </ligand>
    <ligandPart>
        <name>Fe</name>
        <dbReference type="ChEBI" id="CHEBI:18248"/>
    </ligandPart>
</feature>
<protein>
    <recommendedName>
        <fullName>Cytochrome c-555</fullName>
    </recommendedName>
    <alternativeName>
        <fullName>Cytochrome c555</fullName>
    </alternativeName>
</protein>
<accession>P00123</accession>
<proteinExistence type="evidence at protein level"/>
<organism>
    <name type="scientific">Chlorobaculum thiosulfatiphilum</name>
    <name type="common">Chlorobium limicola f.sp. thiosulfatophilum</name>
    <dbReference type="NCBI Taxonomy" id="115852"/>
    <lineage>
        <taxon>Bacteria</taxon>
        <taxon>Pseudomonadati</taxon>
        <taxon>Chlorobiota</taxon>
        <taxon>Chlorobiia</taxon>
        <taxon>Chlorobiales</taxon>
        <taxon>Chlorobiaceae</taxon>
        <taxon>Chlorobaculum</taxon>
    </lineage>
</organism>
<sequence>YDAAAGKATYDASCAMCHKTGMMGAPKVGDKAAWAPHIAKGMNVMVANSIKGYKGTKGMMPAKGGNPKLTDAQVGNAVAYMVGQSK</sequence>
<keyword id="KW-0903">Direct protein sequencing</keyword>
<keyword id="KW-0249">Electron transport</keyword>
<keyword id="KW-0349">Heme</keyword>
<keyword id="KW-0408">Iron</keyword>
<keyword id="KW-0479">Metal-binding</keyword>
<keyword id="KW-0602">Photosynthesis</keyword>
<keyword id="KW-0813">Transport</keyword>
<reference key="1">
    <citation type="journal article" date="1976" name="Biochem. J.">
        <title>The amino acid sequences of the cytochromes c-555 from two green sulphur bacteria of the genus Chlorobium.</title>
        <authorList>
            <person name="van Beeumen J."/>
            <person name="Ambler R.P."/>
            <person name="Meyer T.E."/>
            <person name="Kamen M.D."/>
            <person name="Olson J.M."/>
            <person name="Shaw E.K."/>
        </authorList>
    </citation>
    <scope>PROTEIN SEQUENCE</scope>
</reference>
<reference key="2">
    <citation type="journal article" date="1977" name="Proc. Natl. Acad. Sci. U.S.A.">
        <title>Structure of cytochrome c555 of Chlorobium thiosulfatophilum: primitive low-potential cytochrome c.</title>
        <authorList>
            <person name="Korszun Z.R."/>
            <person name="Salemme F.R."/>
        </authorList>
    </citation>
    <scope>X-RAY CRYSTALLOGRAPHY (2.7 ANGSTROMS)</scope>
</reference>
<comment type="function">
    <text>This basic c-type monoheme cytochrome has been found exclusively in the green photosynthetic bacteria, although its role in bacterial photosynthesis is not established. It has an unusually low redox potential compared with mitochondrial cytochrome c. It is reactive with cytochrome c oxidases but not with reductases.</text>
</comment>
<comment type="PTM">
    <text>Binds 1 heme c group covalently per subunit.</text>
</comment>
<name>C555_CHLTI</name>